<name>NHAP2_ECO57</name>
<proteinExistence type="inferred from homology"/>
<protein>
    <recommendedName>
        <fullName evidence="1">K(+)/H(+) antiporter NhaP2</fullName>
    </recommendedName>
    <alternativeName>
        <fullName evidence="1">Potassium/proton antiporter NhaP2</fullName>
    </alternativeName>
</protein>
<feature type="chain" id="PRO_0000052383" description="K(+)/H(+) antiporter NhaP2">
    <location>
        <begin position="1"/>
        <end position="578"/>
    </location>
</feature>
<feature type="transmembrane region" description="Helical" evidence="1">
    <location>
        <begin position="6"/>
        <end position="26"/>
    </location>
</feature>
<feature type="transmembrane region" description="Helical" evidence="1">
    <location>
        <begin position="30"/>
        <end position="50"/>
    </location>
</feature>
<feature type="transmembrane region" description="Helical" evidence="1">
    <location>
        <begin position="58"/>
        <end position="78"/>
    </location>
</feature>
<feature type="transmembrane region" description="Helical" evidence="1">
    <location>
        <begin position="87"/>
        <end position="107"/>
    </location>
</feature>
<feature type="transmembrane region" description="Helical" evidence="1">
    <location>
        <begin position="109"/>
        <end position="129"/>
    </location>
</feature>
<feature type="transmembrane region" description="Helical" evidence="1">
    <location>
        <begin position="156"/>
        <end position="176"/>
    </location>
</feature>
<feature type="transmembrane region" description="Helical" evidence="1">
    <location>
        <begin position="185"/>
        <end position="205"/>
    </location>
</feature>
<feature type="transmembrane region" description="Helical" evidence="1">
    <location>
        <begin position="216"/>
        <end position="236"/>
    </location>
</feature>
<feature type="transmembrane region" description="Helical" evidence="1">
    <location>
        <begin position="237"/>
        <end position="257"/>
    </location>
</feature>
<feature type="transmembrane region" description="Helical" evidence="1">
    <location>
        <begin position="270"/>
        <end position="290"/>
    </location>
</feature>
<feature type="transmembrane region" description="Helical" evidence="1">
    <location>
        <begin position="293"/>
        <end position="313"/>
    </location>
</feature>
<feature type="transmembrane region" description="Helical" evidence="1">
    <location>
        <begin position="334"/>
        <end position="354"/>
    </location>
</feature>
<feature type="transmembrane region" description="Helical" evidence="1">
    <location>
        <begin position="363"/>
        <end position="383"/>
    </location>
</feature>
<feature type="domain" description="RCK C-terminal" evidence="1">
    <location>
        <begin position="403"/>
        <end position="485"/>
    </location>
</feature>
<evidence type="ECO:0000255" key="1">
    <source>
        <dbReference type="HAMAP-Rule" id="MF_01075"/>
    </source>
</evidence>
<evidence type="ECO:0000305" key="2"/>
<accession>P0A3R8</accession>
<accession>P59239</accession>
<accession>Q8XDK0</accession>
<comment type="function">
    <text evidence="1">K(+)/H(+) antiporter that extrudes potassium in exchange for external protons and maintains the internal concentration of potassium under toxic levels.</text>
</comment>
<comment type="catalytic activity">
    <reaction evidence="1">
        <text>K(+)(in) + H(+)(out) = K(+)(out) + H(+)(in)</text>
        <dbReference type="Rhea" id="RHEA:29467"/>
        <dbReference type="ChEBI" id="CHEBI:15378"/>
        <dbReference type="ChEBI" id="CHEBI:29103"/>
    </reaction>
    <physiologicalReaction direction="left-to-right" evidence="1">
        <dbReference type="Rhea" id="RHEA:29468"/>
    </physiologicalReaction>
</comment>
<comment type="subcellular location">
    <subcellularLocation>
        <location evidence="1">Cell inner membrane</location>
        <topology evidence="1">Multi-pass membrane protein</topology>
    </subcellularLocation>
</comment>
<comment type="similarity">
    <text evidence="1">Belongs to the monovalent cation:proton antiporter 1 (CPA1) transporter (TC 2.A.36) family. NhaP2 subfamily.</text>
</comment>
<comment type="sequence caution" evidence="2">
    <conflict type="erroneous initiation">
        <sequence resource="EMBL-CDS" id="AAG56042"/>
    </conflict>
    <text>Truncated N-terminus.</text>
</comment>
<reference key="1">
    <citation type="journal article" date="2001" name="Nature">
        <title>Genome sequence of enterohaemorrhagic Escherichia coli O157:H7.</title>
        <authorList>
            <person name="Perna N.T."/>
            <person name="Plunkett G. III"/>
            <person name="Burland V."/>
            <person name="Mau B."/>
            <person name="Glasner J.D."/>
            <person name="Rose D.J."/>
            <person name="Mayhew G.F."/>
            <person name="Evans P.S."/>
            <person name="Gregor J."/>
            <person name="Kirkpatrick H.A."/>
            <person name="Posfai G."/>
            <person name="Hackett J."/>
            <person name="Klink S."/>
            <person name="Boutin A."/>
            <person name="Shao Y."/>
            <person name="Miller L."/>
            <person name="Grotbeck E.J."/>
            <person name="Davis N.W."/>
            <person name="Lim A."/>
            <person name="Dimalanta E.T."/>
            <person name="Potamousis K."/>
            <person name="Apodaca J."/>
            <person name="Anantharaman T.S."/>
            <person name="Lin J."/>
            <person name="Yen G."/>
            <person name="Schwartz D.C."/>
            <person name="Welch R.A."/>
            <person name="Blattner F.R."/>
        </authorList>
    </citation>
    <scope>NUCLEOTIDE SEQUENCE [LARGE SCALE GENOMIC DNA]</scope>
    <source>
        <strain>O157:H7 / EDL933 / ATCC 700927 / EHEC</strain>
    </source>
</reference>
<reference key="2">
    <citation type="journal article" date="2001" name="DNA Res.">
        <title>Complete genome sequence of enterohemorrhagic Escherichia coli O157:H7 and genomic comparison with a laboratory strain K-12.</title>
        <authorList>
            <person name="Hayashi T."/>
            <person name="Makino K."/>
            <person name="Ohnishi M."/>
            <person name="Kurokawa K."/>
            <person name="Ishii K."/>
            <person name="Yokoyama K."/>
            <person name="Han C.-G."/>
            <person name="Ohtsubo E."/>
            <person name="Nakayama K."/>
            <person name="Murata T."/>
            <person name="Tanaka M."/>
            <person name="Tobe T."/>
            <person name="Iida T."/>
            <person name="Takami H."/>
            <person name="Honda T."/>
            <person name="Sasakawa C."/>
            <person name="Ogasawara N."/>
            <person name="Yasunaga T."/>
            <person name="Kuhara S."/>
            <person name="Shiba T."/>
            <person name="Hattori M."/>
            <person name="Shinagawa H."/>
        </authorList>
    </citation>
    <scope>NUCLEOTIDE SEQUENCE [LARGE SCALE GENOMIC DNA]</scope>
    <source>
        <strain>O157:H7 / Sakai / RIMD 0509952 / EHEC</strain>
    </source>
</reference>
<dbReference type="EMBL" id="AE005174">
    <property type="protein sequence ID" value="AAG56042.1"/>
    <property type="status" value="ALT_INIT"/>
    <property type="molecule type" value="Genomic_DNA"/>
</dbReference>
<dbReference type="EMBL" id="BA000007">
    <property type="protein sequence ID" value="BAB35109.2"/>
    <property type="molecule type" value="Genomic_DNA"/>
</dbReference>
<dbReference type="PIR" id="F85697">
    <property type="entry name" value="F85697"/>
</dbReference>
<dbReference type="PIR" id="F90839">
    <property type="entry name" value="F90839"/>
</dbReference>
<dbReference type="RefSeq" id="NP_309713.2">
    <property type="nucleotide sequence ID" value="NC_002695.1"/>
</dbReference>
<dbReference type="RefSeq" id="WP_000340206.1">
    <property type="nucleotide sequence ID" value="NZ_VOAI01000042.1"/>
</dbReference>
<dbReference type="SMR" id="P0A3R8"/>
<dbReference type="STRING" id="155864.Z1954"/>
<dbReference type="GeneID" id="913182"/>
<dbReference type="KEGG" id="ece:Z1954"/>
<dbReference type="KEGG" id="ecs:ECs_1686"/>
<dbReference type="PATRIC" id="fig|386585.9.peg.1784"/>
<dbReference type="eggNOG" id="COG3263">
    <property type="taxonomic scope" value="Bacteria"/>
</dbReference>
<dbReference type="HOGENOM" id="CLU_005912_9_2_6"/>
<dbReference type="OMA" id="QIGMFVL"/>
<dbReference type="Proteomes" id="UP000000558">
    <property type="component" value="Chromosome"/>
</dbReference>
<dbReference type="Proteomes" id="UP000002519">
    <property type="component" value="Chromosome"/>
</dbReference>
<dbReference type="GO" id="GO:0005886">
    <property type="term" value="C:plasma membrane"/>
    <property type="evidence" value="ECO:0007669"/>
    <property type="project" value="UniProtKB-SubCell"/>
</dbReference>
<dbReference type="GO" id="GO:0050660">
    <property type="term" value="F:flavin adenine dinucleotide binding"/>
    <property type="evidence" value="ECO:0007669"/>
    <property type="project" value="InterPro"/>
</dbReference>
<dbReference type="GO" id="GO:0015386">
    <property type="term" value="F:potassium:proton antiporter activity"/>
    <property type="evidence" value="ECO:0007669"/>
    <property type="project" value="UniProtKB-UniRule"/>
</dbReference>
<dbReference type="GO" id="GO:0006884">
    <property type="term" value="P:cell volume homeostasis"/>
    <property type="evidence" value="ECO:0007669"/>
    <property type="project" value="InterPro"/>
</dbReference>
<dbReference type="FunFam" id="1.20.1530.20:FF:000002">
    <property type="entry name" value="K(+)/H(+) antiporter NhaP2"/>
    <property type="match status" value="1"/>
</dbReference>
<dbReference type="FunFam" id="3.30.465.10:FF:000009">
    <property type="entry name" value="K(+)/H(+) antiporter NhaP2"/>
    <property type="match status" value="1"/>
</dbReference>
<dbReference type="FunFam" id="3.30.70.1450:FF:000007">
    <property type="entry name" value="K(+)/H(+) antiporter NhaP2"/>
    <property type="match status" value="1"/>
</dbReference>
<dbReference type="Gene3D" id="1.20.1530.20">
    <property type="match status" value="1"/>
</dbReference>
<dbReference type="Gene3D" id="3.30.465.10">
    <property type="match status" value="1"/>
</dbReference>
<dbReference type="Gene3D" id="3.30.70.1450">
    <property type="entry name" value="Regulator of K+ conductance, C-terminal domain"/>
    <property type="match status" value="1"/>
</dbReference>
<dbReference type="HAMAP" id="MF_01075">
    <property type="entry name" value="NhaP2"/>
    <property type="match status" value="1"/>
</dbReference>
<dbReference type="InterPro" id="IPR006153">
    <property type="entry name" value="Cation/H_exchanger_TM"/>
</dbReference>
<dbReference type="InterPro" id="IPR036318">
    <property type="entry name" value="FAD-bd_PCMH-like_sf"/>
</dbReference>
<dbReference type="InterPro" id="IPR016169">
    <property type="entry name" value="FAD-bd_PCMH_sub2"/>
</dbReference>
<dbReference type="InterPro" id="IPR038770">
    <property type="entry name" value="Na+/solute_symporter_sf"/>
</dbReference>
<dbReference type="InterPro" id="IPR023729">
    <property type="entry name" value="NhaP2"/>
</dbReference>
<dbReference type="InterPro" id="IPR006037">
    <property type="entry name" value="RCK_C"/>
</dbReference>
<dbReference type="InterPro" id="IPR036721">
    <property type="entry name" value="RCK_C_sf"/>
</dbReference>
<dbReference type="InterPro" id="IPR005170">
    <property type="entry name" value="Transptr-assoc_dom"/>
</dbReference>
<dbReference type="NCBIfam" id="NF003714">
    <property type="entry name" value="PRK05326.1-1"/>
    <property type="match status" value="1"/>
</dbReference>
<dbReference type="NCBIfam" id="NF003715">
    <property type="entry name" value="PRK05326.1-2"/>
    <property type="match status" value="1"/>
</dbReference>
<dbReference type="NCBIfam" id="NF003716">
    <property type="entry name" value="PRK05326.1-3"/>
    <property type="match status" value="1"/>
</dbReference>
<dbReference type="PANTHER" id="PTHR32507:SF7">
    <property type="entry name" value="K(+)_H(+) ANTIPORTER NHAP2"/>
    <property type="match status" value="1"/>
</dbReference>
<dbReference type="PANTHER" id="PTHR32507">
    <property type="entry name" value="NA(+)/H(+) ANTIPORTER 1"/>
    <property type="match status" value="1"/>
</dbReference>
<dbReference type="Pfam" id="PF03471">
    <property type="entry name" value="CorC_HlyC"/>
    <property type="match status" value="1"/>
</dbReference>
<dbReference type="Pfam" id="PF00999">
    <property type="entry name" value="Na_H_Exchanger"/>
    <property type="match status" value="1"/>
</dbReference>
<dbReference type="Pfam" id="PF02080">
    <property type="entry name" value="TrkA_C"/>
    <property type="match status" value="1"/>
</dbReference>
<dbReference type="SMART" id="SM01091">
    <property type="entry name" value="CorC_HlyC"/>
    <property type="match status" value="1"/>
</dbReference>
<dbReference type="SUPFAM" id="SSF56176">
    <property type="entry name" value="FAD-binding/transporter-associated domain-like"/>
    <property type="match status" value="1"/>
</dbReference>
<dbReference type="SUPFAM" id="SSF116726">
    <property type="entry name" value="TrkA C-terminal domain-like"/>
    <property type="match status" value="1"/>
</dbReference>
<dbReference type="PROSITE" id="PS51202">
    <property type="entry name" value="RCK_C"/>
    <property type="match status" value="1"/>
</dbReference>
<organism>
    <name type="scientific">Escherichia coli O157:H7</name>
    <dbReference type="NCBI Taxonomy" id="83334"/>
    <lineage>
        <taxon>Bacteria</taxon>
        <taxon>Pseudomonadati</taxon>
        <taxon>Pseudomonadota</taxon>
        <taxon>Gammaproteobacteria</taxon>
        <taxon>Enterobacterales</taxon>
        <taxon>Enterobacteriaceae</taxon>
        <taxon>Escherichia</taxon>
    </lineage>
</organism>
<gene>
    <name evidence="1" type="primary">nhaP2</name>
    <name type="synonym">cvrA</name>
    <name type="ordered locus">Z1954</name>
    <name type="ordered locus">ECs1686</name>
</gene>
<sequence length="578" mass="62205">MDATTIISLFILGSILVTSSILLSSFSSRLGIPILVIFLAIGMLAGVDGVGGIPFDNYPFAYMVSNLALAIILLDGGMRTQASSFRVALGPALSLATLGVLITSGLTGMMAAWLFNLDLIEGLLIGAIVGSTDAAAVFSLLGGKGLNERVGSTLEIESGSNDPMAVFLTITLIAMIQQHESSVSWMFVVDILQQFGLGIVIGLGGGYLLLQMINRIALPAGLYPLLALSGGILIFALTTALEGSGILAVYLCGFLLGNRPIRNRYGILQNFDGLAWLAQIAMFLVLGLLVNPSDLLPIAIPALILSAWMIFFARPLSVFAGLLPFRGFNLRERVFISWVGLRGAVPIILAVFPMMAGLENARLFFNVAFFVVLVSLLLQGTSLSWAAKKAKVVVPPVGRPVSRVGLDIHPENPWEQFVYQLSADKWCVGAALRDLHMPKETRIAALFRDNQLLHPTGSTRLREGDVLCVIGRERDLPALGKLFSQSPPVALDQRFFGDFILEASAKYADVALIYGLEDGREYRDKQQTLGEIVQQLLGAAPVVGDQVEFAGMIWTVAEKEDNEVLKIGVRVAEEEAES</sequence>
<keyword id="KW-0050">Antiport</keyword>
<keyword id="KW-0997">Cell inner membrane</keyword>
<keyword id="KW-1003">Cell membrane</keyword>
<keyword id="KW-0406">Ion transport</keyword>
<keyword id="KW-0472">Membrane</keyword>
<keyword id="KW-0630">Potassium</keyword>
<keyword id="KW-0633">Potassium transport</keyword>
<keyword id="KW-1185">Reference proteome</keyword>
<keyword id="KW-0812">Transmembrane</keyword>
<keyword id="KW-1133">Transmembrane helix</keyword>
<keyword id="KW-0813">Transport</keyword>